<keyword id="KW-0974">Archaeal flagellum</keyword>
<keyword id="KW-1185">Reference proteome</keyword>
<evidence type="ECO:0000305" key="1"/>
<protein>
    <recommendedName>
        <fullName>Putative flagella-related protein C</fullName>
    </recommendedName>
</protein>
<organism>
    <name type="scientific">Methanocaldococcus jannaschii (strain ATCC 43067 / DSM 2661 / JAL-1 / JCM 10045 / NBRC 100440)</name>
    <name type="common">Methanococcus jannaschii</name>
    <dbReference type="NCBI Taxonomy" id="243232"/>
    <lineage>
        <taxon>Archaea</taxon>
        <taxon>Methanobacteriati</taxon>
        <taxon>Methanobacteriota</taxon>
        <taxon>Methanomada group</taxon>
        <taxon>Methanococci</taxon>
        <taxon>Methanococcales</taxon>
        <taxon>Methanocaldococcaceae</taxon>
        <taxon>Methanocaldococcus</taxon>
    </lineage>
</organism>
<dbReference type="EMBL" id="L77117">
    <property type="protein sequence ID" value="AAB98897.1"/>
    <property type="molecule type" value="Genomic_DNA"/>
</dbReference>
<dbReference type="PIR" id="F64411">
    <property type="entry name" value="F64411"/>
</dbReference>
<dbReference type="RefSeq" id="WP_010870408.1">
    <property type="nucleotide sequence ID" value="NC_000909.1"/>
</dbReference>
<dbReference type="SMR" id="Q58304"/>
<dbReference type="FunCoup" id="Q58304">
    <property type="interactions" value="2"/>
</dbReference>
<dbReference type="STRING" id="243232.MJ_0894"/>
<dbReference type="PaxDb" id="243232-MJ_0894"/>
<dbReference type="EnsemblBacteria" id="AAB98897">
    <property type="protein sequence ID" value="AAB98897"/>
    <property type="gene ID" value="MJ_0894"/>
</dbReference>
<dbReference type="GeneID" id="1451783"/>
<dbReference type="KEGG" id="mja:MJ_0894"/>
<dbReference type="eggNOG" id="arCOG05119">
    <property type="taxonomic scope" value="Archaea"/>
</dbReference>
<dbReference type="HOGENOM" id="CLU_123708_0_0_2"/>
<dbReference type="InParanoid" id="Q58304"/>
<dbReference type="OrthoDB" id="121879at2157"/>
<dbReference type="PhylomeDB" id="Q58304"/>
<dbReference type="Proteomes" id="UP000000805">
    <property type="component" value="Chromosome"/>
</dbReference>
<dbReference type="GO" id="GO:0097589">
    <property type="term" value="C:archaeal-type flagellum"/>
    <property type="evidence" value="ECO:0007669"/>
    <property type="project" value="UniProtKB-SubCell"/>
</dbReference>
<dbReference type="InterPro" id="IPR009205">
    <property type="entry name" value="FlaC_arc"/>
</dbReference>
<dbReference type="InterPro" id="IPR052494">
    <property type="entry name" value="Flagella_assembly_related"/>
</dbReference>
<dbReference type="PANTHER" id="PTHR40698:SF2">
    <property type="entry name" value="FLAGELLA-RELATED PROTEIN C-RELATED"/>
    <property type="match status" value="1"/>
</dbReference>
<dbReference type="PANTHER" id="PTHR40698">
    <property type="entry name" value="FLAGELLA-RELATED PROTEIN E-RELATED-RELATED"/>
    <property type="match status" value="1"/>
</dbReference>
<dbReference type="Pfam" id="PF05377">
    <property type="entry name" value="FlaC_arch"/>
    <property type="match status" value="1"/>
</dbReference>
<dbReference type="PIRSF" id="PIRSF018660">
    <property type="entry name" value="Archl_flaC"/>
    <property type="match status" value="1"/>
</dbReference>
<dbReference type="SUPFAM" id="SSF75704">
    <property type="entry name" value="Mitotic arrest deficient-like 1, Mad1"/>
    <property type="match status" value="1"/>
</dbReference>
<gene>
    <name type="primary">flaC</name>
    <name type="ordered locus">MJ0894</name>
</gene>
<reference key="1">
    <citation type="journal article" date="1996" name="Science">
        <title>Complete genome sequence of the methanogenic archaeon, Methanococcus jannaschii.</title>
        <authorList>
            <person name="Bult C.J."/>
            <person name="White O."/>
            <person name="Olsen G.J."/>
            <person name="Zhou L."/>
            <person name="Fleischmann R.D."/>
            <person name="Sutton G.G."/>
            <person name="Blake J.A."/>
            <person name="FitzGerald L.M."/>
            <person name="Clayton R.A."/>
            <person name="Gocayne J.D."/>
            <person name="Kerlavage A.R."/>
            <person name="Dougherty B.A."/>
            <person name="Tomb J.-F."/>
            <person name="Adams M.D."/>
            <person name="Reich C.I."/>
            <person name="Overbeek R."/>
            <person name="Kirkness E.F."/>
            <person name="Weinstock K.G."/>
            <person name="Merrick J.M."/>
            <person name="Glodek A."/>
            <person name="Scott J.L."/>
            <person name="Geoghagen N.S.M."/>
            <person name="Weidman J.F."/>
            <person name="Fuhrmann J.L."/>
            <person name="Nguyen D."/>
            <person name="Utterback T.R."/>
            <person name="Kelley J.M."/>
            <person name="Peterson J.D."/>
            <person name="Sadow P.W."/>
            <person name="Hanna M.C."/>
            <person name="Cotton M.D."/>
            <person name="Roberts K.M."/>
            <person name="Hurst M.A."/>
            <person name="Kaine B.P."/>
            <person name="Borodovsky M."/>
            <person name="Klenk H.-P."/>
            <person name="Fraser C.M."/>
            <person name="Smith H.O."/>
            <person name="Woese C.R."/>
            <person name="Venter J.C."/>
        </authorList>
    </citation>
    <scope>NUCLEOTIDE SEQUENCE [LARGE SCALE GENOMIC DNA]</scope>
    <source>
        <strain>ATCC 43067 / DSM 2661 / JAL-1 / JCM 10045 / NBRC 100440</strain>
    </source>
</reference>
<accession>Q58304</accession>
<proteinExistence type="predicted"/>
<comment type="subcellular location">
    <subcellularLocation>
        <location evidence="1">Archaeal flagellum</location>
    </subcellularLocation>
</comment>
<comment type="similarity">
    <text evidence="1">To M.voltae FlaC.</text>
</comment>
<sequence length="141" mass="16244">METTEGLLAKVNDIESKLPKLESSINNLRKENEMLRVELNKINENLQDIMALYEVVSNQINPFIGVSKITATSLEKLERLETEYKRLKKTVEELTNDLIILGSLYLHQLDINLDEIIEEVLEEEIIKSMSGEDTHDTKDNK</sequence>
<feature type="chain" id="PRO_0000087267" description="Putative flagella-related protein C">
    <location>
        <begin position="1"/>
        <end position="141"/>
    </location>
</feature>
<name>FLAC_METJA</name>